<comment type="function">
    <text evidence="1">Catalyzes the reversible phosphorylation of UMP to UDP.</text>
</comment>
<comment type="catalytic activity">
    <reaction evidence="1">
        <text>UMP + ATP = UDP + ADP</text>
        <dbReference type="Rhea" id="RHEA:24400"/>
        <dbReference type="ChEBI" id="CHEBI:30616"/>
        <dbReference type="ChEBI" id="CHEBI:57865"/>
        <dbReference type="ChEBI" id="CHEBI:58223"/>
        <dbReference type="ChEBI" id="CHEBI:456216"/>
        <dbReference type="EC" id="2.7.4.22"/>
    </reaction>
</comment>
<comment type="activity regulation">
    <text evidence="1">Inhibited by UTP.</text>
</comment>
<comment type="pathway">
    <text evidence="1">Pyrimidine metabolism; CTP biosynthesis via de novo pathway; UDP from UMP (UMPK route): step 1/1.</text>
</comment>
<comment type="subunit">
    <text evidence="1">Homohexamer.</text>
</comment>
<comment type="subcellular location">
    <subcellularLocation>
        <location evidence="1">Cytoplasm</location>
    </subcellularLocation>
</comment>
<comment type="similarity">
    <text evidence="1">Belongs to the UMP kinase family.</text>
</comment>
<gene>
    <name evidence="1" type="primary">pyrH</name>
    <name type="ordered locus">MmarC6_0525</name>
</gene>
<keyword id="KW-0067">ATP-binding</keyword>
<keyword id="KW-0963">Cytoplasm</keyword>
<keyword id="KW-0418">Kinase</keyword>
<keyword id="KW-0547">Nucleotide-binding</keyword>
<keyword id="KW-0665">Pyrimidine biosynthesis</keyword>
<keyword id="KW-0808">Transferase</keyword>
<proteinExistence type="inferred from homology"/>
<evidence type="ECO:0000255" key="1">
    <source>
        <dbReference type="HAMAP-Rule" id="MF_01220"/>
    </source>
</evidence>
<sequence>MDVVFALGGSVLMPKEGASTENIQNYAEAFKKLKEMGHRVSVVVGGGNTARQYISVAREFTNESFCDEIGILATRMNSMLLISALGKDAVKHVPENFKDAELILNMDKILVMGGTHPAHTTDAVSATLAEFIDADLLVIATNVDGVYDKDPRCNEDAVKLDKINTKELLEITGSASMSAGSSGVVDPLASKIIDRAKLKTIVVKGIPEEILASVTENHNGTTITP</sequence>
<dbReference type="EC" id="2.7.4.22" evidence="1"/>
<dbReference type="EMBL" id="CP000867">
    <property type="protein sequence ID" value="ABX01342.1"/>
    <property type="molecule type" value="Genomic_DNA"/>
</dbReference>
<dbReference type="SMR" id="A9A6R4"/>
<dbReference type="STRING" id="444158.MmarC6_0525"/>
<dbReference type="KEGG" id="mmx:MmarC6_0525"/>
<dbReference type="eggNOG" id="arCOG00858">
    <property type="taxonomic scope" value="Archaea"/>
</dbReference>
<dbReference type="HOGENOM" id="CLU_079546_0_0_2"/>
<dbReference type="OrthoDB" id="372251at2157"/>
<dbReference type="PhylomeDB" id="A9A6R4"/>
<dbReference type="UniPathway" id="UPA00159">
    <property type="reaction ID" value="UER00275"/>
</dbReference>
<dbReference type="GO" id="GO:0005737">
    <property type="term" value="C:cytoplasm"/>
    <property type="evidence" value="ECO:0007669"/>
    <property type="project" value="UniProtKB-SubCell"/>
</dbReference>
<dbReference type="GO" id="GO:0005524">
    <property type="term" value="F:ATP binding"/>
    <property type="evidence" value="ECO:0007669"/>
    <property type="project" value="UniProtKB-KW"/>
</dbReference>
<dbReference type="GO" id="GO:0033862">
    <property type="term" value="F:UMP kinase activity"/>
    <property type="evidence" value="ECO:0007669"/>
    <property type="project" value="UniProtKB-EC"/>
</dbReference>
<dbReference type="GO" id="GO:0044210">
    <property type="term" value="P:'de novo' CTP biosynthetic process"/>
    <property type="evidence" value="ECO:0007669"/>
    <property type="project" value="UniProtKB-UniRule"/>
</dbReference>
<dbReference type="GO" id="GO:0006225">
    <property type="term" value="P:UDP biosynthetic process"/>
    <property type="evidence" value="ECO:0007669"/>
    <property type="project" value="TreeGrafter"/>
</dbReference>
<dbReference type="CDD" id="cd04253">
    <property type="entry name" value="AAK_UMPK-PyrH-Pf"/>
    <property type="match status" value="1"/>
</dbReference>
<dbReference type="Gene3D" id="3.40.1160.10">
    <property type="entry name" value="Acetylglutamate kinase-like"/>
    <property type="match status" value="1"/>
</dbReference>
<dbReference type="HAMAP" id="MF_01220_A">
    <property type="entry name" value="PyrH_A"/>
    <property type="match status" value="1"/>
</dbReference>
<dbReference type="InterPro" id="IPR036393">
    <property type="entry name" value="AceGlu_kinase-like_sf"/>
</dbReference>
<dbReference type="InterPro" id="IPR001048">
    <property type="entry name" value="Asp/Glu/Uridylate_kinase"/>
</dbReference>
<dbReference type="InterPro" id="IPR011817">
    <property type="entry name" value="Uridylate_kinase"/>
</dbReference>
<dbReference type="InterPro" id="IPR011818">
    <property type="entry name" value="Uridylate_kinase_arch/spir"/>
</dbReference>
<dbReference type="NCBIfam" id="TIGR02076">
    <property type="entry name" value="pyrH_arch"/>
    <property type="match status" value="1"/>
</dbReference>
<dbReference type="PANTHER" id="PTHR42833">
    <property type="entry name" value="URIDYLATE KINASE"/>
    <property type="match status" value="1"/>
</dbReference>
<dbReference type="PANTHER" id="PTHR42833:SF4">
    <property type="entry name" value="URIDYLATE KINASE PUMPKIN, CHLOROPLASTIC"/>
    <property type="match status" value="1"/>
</dbReference>
<dbReference type="Pfam" id="PF00696">
    <property type="entry name" value="AA_kinase"/>
    <property type="match status" value="1"/>
</dbReference>
<dbReference type="PIRSF" id="PIRSF005650">
    <property type="entry name" value="Uridylate_kin"/>
    <property type="match status" value="1"/>
</dbReference>
<dbReference type="SUPFAM" id="SSF53633">
    <property type="entry name" value="Carbamate kinase-like"/>
    <property type="match status" value="1"/>
</dbReference>
<feature type="chain" id="PRO_1000139218" description="Uridylate kinase">
    <location>
        <begin position="1"/>
        <end position="225"/>
    </location>
</feature>
<feature type="binding site" evidence="1">
    <location>
        <begin position="9"/>
        <end position="10"/>
    </location>
    <ligand>
        <name>ATP</name>
        <dbReference type="ChEBI" id="CHEBI:30616"/>
    </ligand>
</feature>
<feature type="binding site" evidence="1">
    <location>
        <position position="46"/>
    </location>
    <ligand>
        <name>UMP</name>
        <dbReference type="ChEBI" id="CHEBI:57865"/>
    </ligand>
</feature>
<feature type="binding site" evidence="1">
    <location>
        <position position="47"/>
    </location>
    <ligand>
        <name>ATP</name>
        <dbReference type="ChEBI" id="CHEBI:30616"/>
    </ligand>
</feature>
<feature type="binding site" evidence="1">
    <location>
        <position position="51"/>
    </location>
    <ligand>
        <name>ATP</name>
        <dbReference type="ChEBI" id="CHEBI:30616"/>
    </ligand>
</feature>
<feature type="binding site" evidence="1">
    <location>
        <position position="67"/>
    </location>
    <ligand>
        <name>UMP</name>
        <dbReference type="ChEBI" id="CHEBI:57865"/>
    </ligand>
</feature>
<feature type="binding site" evidence="1">
    <location>
        <begin position="115"/>
        <end position="121"/>
    </location>
    <ligand>
        <name>UMP</name>
        <dbReference type="ChEBI" id="CHEBI:57865"/>
    </ligand>
</feature>
<feature type="binding site" evidence="1">
    <location>
        <position position="141"/>
    </location>
    <ligand>
        <name>ATP</name>
        <dbReference type="ChEBI" id="CHEBI:30616"/>
    </ligand>
</feature>
<feature type="binding site" evidence="1">
    <location>
        <position position="142"/>
    </location>
    <ligand>
        <name>ATP</name>
        <dbReference type="ChEBI" id="CHEBI:30616"/>
    </ligand>
</feature>
<feature type="binding site" evidence="1">
    <location>
        <position position="147"/>
    </location>
    <ligand>
        <name>ATP</name>
        <dbReference type="ChEBI" id="CHEBI:30616"/>
    </ligand>
</feature>
<feature type="binding site" evidence="1">
    <location>
        <position position="150"/>
    </location>
    <ligand>
        <name>ATP</name>
        <dbReference type="ChEBI" id="CHEBI:30616"/>
    </ligand>
</feature>
<organism>
    <name type="scientific">Methanococcus maripaludis (strain C6 / ATCC BAA-1332)</name>
    <dbReference type="NCBI Taxonomy" id="444158"/>
    <lineage>
        <taxon>Archaea</taxon>
        <taxon>Methanobacteriati</taxon>
        <taxon>Methanobacteriota</taxon>
        <taxon>Methanomada group</taxon>
        <taxon>Methanococci</taxon>
        <taxon>Methanococcales</taxon>
        <taxon>Methanococcaceae</taxon>
        <taxon>Methanococcus</taxon>
    </lineage>
</organism>
<name>PYRH_METM6</name>
<reference key="1">
    <citation type="submission" date="2007-10" db="EMBL/GenBank/DDBJ databases">
        <title>Complete sequence of Methanococcus maripaludis C6.</title>
        <authorList>
            <consortium name="US DOE Joint Genome Institute"/>
            <person name="Copeland A."/>
            <person name="Lucas S."/>
            <person name="Lapidus A."/>
            <person name="Barry K."/>
            <person name="Glavina del Rio T."/>
            <person name="Dalin E."/>
            <person name="Tice H."/>
            <person name="Pitluck S."/>
            <person name="Clum A."/>
            <person name="Schmutz J."/>
            <person name="Larimer F."/>
            <person name="Land M."/>
            <person name="Hauser L."/>
            <person name="Kyrpides N."/>
            <person name="Mikhailova N."/>
            <person name="Sieprawska-Lupa M."/>
            <person name="Whitman W.B."/>
            <person name="Richardson P."/>
        </authorList>
    </citation>
    <scope>NUCLEOTIDE SEQUENCE [LARGE SCALE GENOMIC DNA]</scope>
    <source>
        <strain>C6 / ATCC BAA-1332</strain>
    </source>
</reference>
<accession>A9A6R4</accession>
<protein>
    <recommendedName>
        <fullName evidence="1">Uridylate kinase</fullName>
        <shortName evidence="1">UK</shortName>
        <ecNumber evidence="1">2.7.4.22</ecNumber>
    </recommendedName>
    <alternativeName>
        <fullName evidence="1">Uridine monophosphate kinase</fullName>
        <shortName evidence="1">UMP kinase</shortName>
        <shortName evidence="1">UMPK</shortName>
    </alternativeName>
</protein>